<name>MZT1_DANRE</name>
<dbReference type="EMBL" id="BC059646">
    <property type="status" value="NOT_ANNOTATED_CDS"/>
    <property type="molecule type" value="mRNA"/>
</dbReference>
<dbReference type="RefSeq" id="NP_001289735.1">
    <property type="nucleotide sequence ID" value="NM_001302806.1"/>
</dbReference>
<dbReference type="SMR" id="P0C8Y1"/>
<dbReference type="FunCoup" id="P0C8Y1">
    <property type="interactions" value="289"/>
</dbReference>
<dbReference type="STRING" id="7955.ENSDARP00000126983"/>
<dbReference type="PaxDb" id="7955-ENSDARP00000126983"/>
<dbReference type="Ensembl" id="ENSDART00000152175">
    <property type="protein sequence ID" value="ENSDARP00000126713"/>
    <property type="gene ID" value="ENSDARG00000096668"/>
</dbReference>
<dbReference type="GeneID" id="100333194"/>
<dbReference type="KEGG" id="dre:100333194"/>
<dbReference type="AGR" id="ZFIN:ZDB-GENE-090313-33"/>
<dbReference type="CTD" id="440145"/>
<dbReference type="ZFIN" id="ZDB-GENE-090313-33">
    <property type="gene designation" value="mzt1"/>
</dbReference>
<dbReference type="eggNOG" id="ENOG502S6UI">
    <property type="taxonomic scope" value="Eukaryota"/>
</dbReference>
<dbReference type="HOGENOM" id="CLU_160285_0_0_1"/>
<dbReference type="InParanoid" id="P0C8Y1"/>
<dbReference type="OMA" id="LSICVGM"/>
<dbReference type="OrthoDB" id="48571at2759"/>
<dbReference type="PRO" id="PR:P0C8Y1"/>
<dbReference type="Proteomes" id="UP000000437">
    <property type="component" value="Alternate scaffold 1"/>
</dbReference>
<dbReference type="Proteomes" id="UP000000437">
    <property type="component" value="Chromosome 1"/>
</dbReference>
<dbReference type="Bgee" id="ENSDARG00000096668">
    <property type="expression patterns" value="Expressed in somite and 28 other cell types or tissues"/>
</dbReference>
<dbReference type="ExpressionAtlas" id="P0C8Y1">
    <property type="expression patterns" value="baseline and differential"/>
</dbReference>
<dbReference type="GO" id="GO:0005813">
    <property type="term" value="C:centrosome"/>
    <property type="evidence" value="ECO:0000250"/>
    <property type="project" value="UniProtKB"/>
</dbReference>
<dbReference type="GO" id="GO:0005737">
    <property type="term" value="C:cytoplasm"/>
    <property type="evidence" value="ECO:0007669"/>
    <property type="project" value="UniProtKB-KW"/>
</dbReference>
<dbReference type="GO" id="GO:0000931">
    <property type="term" value="C:gamma-tubulin ring complex"/>
    <property type="evidence" value="ECO:0000250"/>
    <property type="project" value="UniProtKB"/>
</dbReference>
<dbReference type="GO" id="GO:0031021">
    <property type="term" value="C:interphase microtubule organizing center"/>
    <property type="evidence" value="ECO:0000318"/>
    <property type="project" value="GO_Central"/>
</dbReference>
<dbReference type="GO" id="GO:0005819">
    <property type="term" value="C:spindle"/>
    <property type="evidence" value="ECO:0000250"/>
    <property type="project" value="UniProtKB"/>
</dbReference>
<dbReference type="GO" id="GO:0033566">
    <property type="term" value="P:gamma-tubulin complex localization"/>
    <property type="evidence" value="ECO:0000250"/>
    <property type="project" value="UniProtKB"/>
</dbReference>
<dbReference type="GO" id="GO:0051415">
    <property type="term" value="P:microtubule nucleation by interphase microtubule organizing center"/>
    <property type="evidence" value="ECO:0000318"/>
    <property type="project" value="GO_Central"/>
</dbReference>
<dbReference type="GO" id="GO:0090307">
    <property type="term" value="P:mitotic spindle assembly"/>
    <property type="evidence" value="ECO:0000318"/>
    <property type="project" value="GO_Central"/>
</dbReference>
<dbReference type="InterPro" id="IPR022214">
    <property type="entry name" value="MZT1"/>
</dbReference>
<dbReference type="PANTHER" id="PTHR28520">
    <property type="entry name" value="MITOTIC-SPINDLE ORGANIZING PROTEIN 1"/>
    <property type="match status" value="1"/>
</dbReference>
<dbReference type="PANTHER" id="PTHR28520:SF2">
    <property type="entry name" value="MITOTIC-SPINDLE ORGANIZING PROTEIN 1"/>
    <property type="match status" value="1"/>
</dbReference>
<dbReference type="Pfam" id="PF12554">
    <property type="entry name" value="MOZART1"/>
    <property type="match status" value="1"/>
</dbReference>
<organism>
    <name type="scientific">Danio rerio</name>
    <name type="common">Zebrafish</name>
    <name type="synonym">Brachydanio rerio</name>
    <dbReference type="NCBI Taxonomy" id="7955"/>
    <lineage>
        <taxon>Eukaryota</taxon>
        <taxon>Metazoa</taxon>
        <taxon>Chordata</taxon>
        <taxon>Craniata</taxon>
        <taxon>Vertebrata</taxon>
        <taxon>Euteleostomi</taxon>
        <taxon>Actinopterygii</taxon>
        <taxon>Neopterygii</taxon>
        <taxon>Teleostei</taxon>
        <taxon>Ostariophysi</taxon>
        <taxon>Cypriniformes</taxon>
        <taxon>Danionidae</taxon>
        <taxon>Danioninae</taxon>
        <taxon>Danio</taxon>
    </lineage>
</organism>
<sequence>MASPASANMNAVRETMDVLLEISRLLNTGLDMESLSICVRLCEQGINPEALSSVIKELRRASDSLKASENSTSQG</sequence>
<accession>P0C8Y1</accession>
<protein>
    <recommendedName>
        <fullName>Mitotic-spindle organizing protein 1</fullName>
    </recommendedName>
    <alternativeName>
        <fullName>Mitotic-spindle organizing protein associated with a ring of gamma-tubulin 1</fullName>
    </alternativeName>
</protein>
<comment type="function">
    <text evidence="1">Required for gamma-tubulin complex recruitment to the centrosome.</text>
</comment>
<comment type="subunit">
    <text evidence="1">Part of the gamma-tubulin complex.</text>
</comment>
<comment type="subcellular location">
    <subcellularLocation>
        <location evidence="1">Cytoplasm</location>
        <location evidence="1">Cytoskeleton</location>
        <location evidence="1">Microtubule organizing center</location>
        <location evidence="1">Centrosome</location>
    </subcellularLocation>
    <subcellularLocation>
        <location evidence="1">Cytoplasm</location>
        <location evidence="1">Cytoskeleton</location>
        <location evidence="1">Spindle</location>
    </subcellularLocation>
</comment>
<comment type="similarity">
    <text evidence="2">Belongs to the MOZART1 family.</text>
</comment>
<keyword id="KW-0963">Cytoplasm</keyword>
<keyword id="KW-0206">Cytoskeleton</keyword>
<keyword id="KW-1185">Reference proteome</keyword>
<feature type="chain" id="PRO_0000366192" description="Mitotic-spindle organizing protein 1">
    <location>
        <begin position="1"/>
        <end position="75"/>
    </location>
</feature>
<reference key="1">
    <citation type="submission" date="2003-10" db="EMBL/GenBank/DDBJ databases">
        <authorList>
            <consortium name="NIH - Zebrafish Gene Collection (ZGC) project"/>
        </authorList>
    </citation>
    <scope>NUCLEOTIDE SEQUENCE [LARGE SCALE MRNA]</scope>
    <source>
        <tissue>Retina</tissue>
    </source>
</reference>
<evidence type="ECO:0000250" key="1"/>
<evidence type="ECO:0000305" key="2"/>
<gene>
    <name type="primary">mzt1</name>
    <name type="synonym">mozart1</name>
</gene>
<proteinExistence type="inferred from homology"/>